<organism>
    <name type="scientific">Rattus norvegicus</name>
    <name type="common">Rat</name>
    <dbReference type="NCBI Taxonomy" id="10116"/>
    <lineage>
        <taxon>Eukaryota</taxon>
        <taxon>Metazoa</taxon>
        <taxon>Chordata</taxon>
        <taxon>Craniata</taxon>
        <taxon>Vertebrata</taxon>
        <taxon>Euteleostomi</taxon>
        <taxon>Mammalia</taxon>
        <taxon>Eutheria</taxon>
        <taxon>Euarchontoglires</taxon>
        <taxon>Glires</taxon>
        <taxon>Rodentia</taxon>
        <taxon>Myomorpha</taxon>
        <taxon>Muroidea</taxon>
        <taxon>Muridae</taxon>
        <taxon>Murinae</taxon>
        <taxon>Rattus</taxon>
    </lineage>
</organism>
<protein>
    <recommendedName>
        <fullName>Alpha-2B adrenergic receptor</fullName>
    </recommendedName>
    <alternativeName>
        <fullName>Alpha-2B adrenoreceptor</fullName>
        <shortName>Alpha-2B adrenoceptor</shortName>
        <shortName>Alpha-2BAR</shortName>
    </alternativeName>
</protein>
<reference key="1">
    <citation type="journal article" date="1990" name="Proc. Natl. Acad. Sci. U.S.A.">
        <title>Molecular characterization of a rat alpha 2B-adrenergic receptor.</title>
        <authorList>
            <person name="Zeng D."/>
            <person name="Harrison J.K."/>
            <person name="D'Angelo D.D."/>
            <person name="Barber C.M."/>
            <person name="Tucker A.L."/>
            <person name="Lu Z."/>
            <person name="Lynch K.R."/>
        </authorList>
    </citation>
    <scope>NUCLEOTIDE SEQUENCE [MRNA]</scope>
    <source>
        <tissue>Kidney</tissue>
    </source>
</reference>
<reference key="2">
    <citation type="journal article" date="2005" name="Biochem. Pharmacol.">
        <title>Cloning and functional characterization of the rat alpha2B-adrenergic receptor gene promoter region: evidence for binding sites for erythropoiesis-related transcription factors GATA1 and NF-E2.</title>
        <authorList>
            <person name="Schaak S."/>
            <person name="Cussac D."/>
            <person name="Labialle S."/>
            <person name="Mignotte V."/>
            <person name="Paris H."/>
        </authorList>
    </citation>
    <scope>NUCLEOTIDE SEQUENCE [GENOMIC DNA]</scope>
    <source>
        <strain>Sprague-Dawley</strain>
    </source>
</reference>
<reference key="3">
    <citation type="journal article" date="1995" name="Am. J. Hypertens.">
        <title>Differential sodium regulation between salt-sensitive and salt-resistant Sabra rats is not due to any mutation in the renal alpha 2B-adrenoceptor gene.</title>
        <authorList>
            <person name="le Jossec M."/>
            <person name="Cloix J.F."/>
            <person name="Pecquery R."/>
            <person name="Giudicelli Y."/>
            <person name="Dausse J.P."/>
        </authorList>
    </citation>
    <scope>NUCLEOTIDE SEQUENCE [GENOMIC DNA] OF 6-453</scope>
    <source>
        <strain>Sabra</strain>
        <tissue>Kidney</tissue>
    </source>
</reference>
<sequence>MSGPTMDHQEPYSVQATAAIASAITFLILFTIFGNALVILAVLTSRSLRAPQNLFLVSLAAADILVATLIIPFSLANELLGYWYFWRAWCEVYLALDVLFCTSSIVHLCAISLDRYWAVSRALEYNSKRTPRRIKCIILTVWLIAAVISLPPLIYKGDQRPEPRGLPQCELNQEAWYILASSIGSFFAPCLIMILVYLRIYVIAKRSHCRGLGAKRGSGEGESKKPQPVAGGVPTSAKVPTLVSPLSSVGEANGHPKPPREKEEGETPEDPEARALPPTWSALPRSGQGQKKGTSGATAEEGDEEDEEEVEECEPQTLPASPASVCNPPLQQPQTSRVLATLRGQVLLGKNVGVASGQWWRRRTQLSREKRFTFVLAVVIGVFVVCWFPFFFSYSLGAICPQHCKVPHGLFQFFFWIGYCNSSLNPVIYTVFNQDFRRAFRRILCRPWTQTGW</sequence>
<evidence type="ECO:0000250" key="1"/>
<evidence type="ECO:0000250" key="2">
    <source>
        <dbReference type="UniProtKB" id="P18089"/>
    </source>
</evidence>
<evidence type="ECO:0000255" key="3"/>
<evidence type="ECO:0000255" key="4">
    <source>
        <dbReference type="PROSITE-ProRule" id="PRU00521"/>
    </source>
</evidence>
<evidence type="ECO:0000256" key="5">
    <source>
        <dbReference type="SAM" id="MobiDB-lite"/>
    </source>
</evidence>
<evidence type="ECO:0000305" key="6"/>
<gene>
    <name type="primary">Adra2b</name>
</gene>
<dbReference type="EMBL" id="M32061">
    <property type="protein sequence ID" value="AAA40635.1"/>
    <property type="molecule type" value="mRNA"/>
</dbReference>
<dbReference type="EMBL" id="AF366899">
    <property type="protein sequence ID" value="AAK53388.1"/>
    <property type="molecule type" value="Genomic_DNA"/>
</dbReference>
<dbReference type="EMBL" id="X74400">
    <property type="protein sequence ID" value="CAA52411.1"/>
    <property type="molecule type" value="Genomic_DNA"/>
</dbReference>
<dbReference type="PIR" id="A35642">
    <property type="entry name" value="A35642"/>
</dbReference>
<dbReference type="PIR" id="I51883">
    <property type="entry name" value="I51883"/>
</dbReference>
<dbReference type="RefSeq" id="NP_612514.2">
    <property type="nucleotide sequence ID" value="NM_138505.2"/>
</dbReference>
<dbReference type="SMR" id="P19328"/>
<dbReference type="CORUM" id="P19328"/>
<dbReference type="FunCoup" id="P19328">
    <property type="interactions" value="177"/>
</dbReference>
<dbReference type="IntAct" id="P19328">
    <property type="interactions" value="2"/>
</dbReference>
<dbReference type="STRING" id="10116.ENSRNOP00000018584"/>
<dbReference type="BindingDB" id="P19328"/>
<dbReference type="ChEMBL" id="CHEMBL266"/>
<dbReference type="DrugCentral" id="P19328"/>
<dbReference type="GuidetoPHARMACOLOGY" id="26"/>
<dbReference type="GlyGen" id="P19328">
    <property type="glycosylation" value="1 site"/>
</dbReference>
<dbReference type="PhosphoSitePlus" id="P19328"/>
<dbReference type="PaxDb" id="10116-ENSRNOP00000018584"/>
<dbReference type="Ensembl" id="ENSRNOT00000018584.7">
    <property type="protein sequence ID" value="ENSRNOP00000018584.3"/>
    <property type="gene ID" value="ENSRNOG00000013887.7"/>
</dbReference>
<dbReference type="GeneID" id="24174"/>
<dbReference type="KEGG" id="rno:24174"/>
<dbReference type="UCSC" id="RGD:2057">
    <property type="organism name" value="rat"/>
</dbReference>
<dbReference type="AGR" id="RGD:2057"/>
<dbReference type="CTD" id="151"/>
<dbReference type="RGD" id="2057">
    <property type="gene designation" value="Adra2b"/>
</dbReference>
<dbReference type="eggNOG" id="KOG3656">
    <property type="taxonomic scope" value="Eukaryota"/>
</dbReference>
<dbReference type="GeneTree" id="ENSGT00940000161915"/>
<dbReference type="HOGENOM" id="CLU_009579_11_1_1"/>
<dbReference type="InParanoid" id="P19328"/>
<dbReference type="OMA" id="ANPWKRK"/>
<dbReference type="OrthoDB" id="5975661at2759"/>
<dbReference type="PhylomeDB" id="P19328"/>
<dbReference type="TreeFam" id="TF316350"/>
<dbReference type="Reactome" id="R-RNO-390696">
    <property type="pathway name" value="Adrenoceptors"/>
</dbReference>
<dbReference type="Reactome" id="R-RNO-392023">
    <property type="pathway name" value="Adrenaline signalling through Alpha-2 adrenergic receptor"/>
</dbReference>
<dbReference type="Reactome" id="R-RNO-418594">
    <property type="pathway name" value="G alpha (i) signalling events"/>
</dbReference>
<dbReference type="Reactome" id="R-RNO-418597">
    <property type="pathway name" value="G alpha (z) signalling events"/>
</dbReference>
<dbReference type="PRO" id="PR:P19328"/>
<dbReference type="Proteomes" id="UP000002494">
    <property type="component" value="Chromosome 3"/>
</dbReference>
<dbReference type="Bgee" id="ENSRNOG00000013887">
    <property type="expression patterns" value="Expressed in adult mammalian kidney and 7 other cell types or tissues"/>
</dbReference>
<dbReference type="GO" id="GO:0009986">
    <property type="term" value="C:cell surface"/>
    <property type="evidence" value="ECO:0000250"/>
    <property type="project" value="UniProtKB"/>
</dbReference>
<dbReference type="GO" id="GO:0005829">
    <property type="term" value="C:cytosol"/>
    <property type="evidence" value="ECO:0007669"/>
    <property type="project" value="Ensembl"/>
</dbReference>
<dbReference type="GO" id="GO:0043231">
    <property type="term" value="C:intracellular membrane-bounded organelle"/>
    <property type="evidence" value="ECO:0007669"/>
    <property type="project" value="Ensembl"/>
</dbReference>
<dbReference type="GO" id="GO:0005886">
    <property type="term" value="C:plasma membrane"/>
    <property type="evidence" value="ECO:0000318"/>
    <property type="project" value="GO_Central"/>
</dbReference>
<dbReference type="GO" id="GO:0004935">
    <property type="term" value="F:adrenergic receptor activity"/>
    <property type="evidence" value="ECO:0000266"/>
    <property type="project" value="RGD"/>
</dbReference>
<dbReference type="GO" id="GO:0004938">
    <property type="term" value="F:alpha2-adrenergic receptor activity"/>
    <property type="evidence" value="ECO:0000314"/>
    <property type="project" value="RGD"/>
</dbReference>
<dbReference type="GO" id="GO:0051379">
    <property type="term" value="F:epinephrine binding"/>
    <property type="evidence" value="ECO:0000266"/>
    <property type="project" value="RGD"/>
</dbReference>
<dbReference type="GO" id="GO:0071875">
    <property type="term" value="P:adrenergic receptor signaling pathway"/>
    <property type="evidence" value="ECO:0000266"/>
    <property type="project" value="RGD"/>
</dbReference>
<dbReference type="GO" id="GO:0001525">
    <property type="term" value="P:angiogenesis"/>
    <property type="evidence" value="ECO:0000266"/>
    <property type="project" value="RGD"/>
</dbReference>
<dbReference type="GO" id="GO:0007565">
    <property type="term" value="P:female pregnancy"/>
    <property type="evidence" value="ECO:0000315"/>
    <property type="project" value="RGD"/>
</dbReference>
<dbReference type="GO" id="GO:0007186">
    <property type="term" value="P:G protein-coupled receptor signaling pathway"/>
    <property type="evidence" value="ECO:0000266"/>
    <property type="project" value="RGD"/>
</dbReference>
<dbReference type="GO" id="GO:0000165">
    <property type="term" value="P:MAPK cascade"/>
    <property type="evidence" value="ECO:0000266"/>
    <property type="project" value="RGD"/>
</dbReference>
<dbReference type="GO" id="GO:0030168">
    <property type="term" value="P:platelet activation"/>
    <property type="evidence" value="ECO:0007669"/>
    <property type="project" value="InterPro"/>
</dbReference>
<dbReference type="GO" id="GO:0045777">
    <property type="term" value="P:positive regulation of blood pressure"/>
    <property type="evidence" value="ECO:0000315"/>
    <property type="project" value="RGD"/>
</dbReference>
<dbReference type="GO" id="GO:0043410">
    <property type="term" value="P:positive regulation of MAPK cascade"/>
    <property type="evidence" value="ECO:0000315"/>
    <property type="project" value="RGD"/>
</dbReference>
<dbReference type="GO" id="GO:0045666">
    <property type="term" value="P:positive regulation of neuron differentiation"/>
    <property type="evidence" value="ECO:0000266"/>
    <property type="project" value="RGD"/>
</dbReference>
<dbReference type="GO" id="GO:0051897">
    <property type="term" value="P:positive regulation of phosphatidylinositol 3-kinase/protein kinase B signal transduction"/>
    <property type="evidence" value="ECO:0007669"/>
    <property type="project" value="Ensembl"/>
</dbReference>
<dbReference type="GO" id="GO:0070474">
    <property type="term" value="P:positive regulation of uterine smooth muscle contraction"/>
    <property type="evidence" value="ECO:0000315"/>
    <property type="project" value="RGD"/>
</dbReference>
<dbReference type="GO" id="GO:0003056">
    <property type="term" value="P:regulation of vascular associated smooth muscle contraction"/>
    <property type="evidence" value="ECO:0000315"/>
    <property type="project" value="RGD"/>
</dbReference>
<dbReference type="CDD" id="cd15321">
    <property type="entry name" value="7tmA_alpha2B_AR"/>
    <property type="match status" value="1"/>
</dbReference>
<dbReference type="FunFam" id="1.20.1070.10:FF:000185">
    <property type="entry name" value="Alpha-2B adrenergic receptor"/>
    <property type="match status" value="1"/>
</dbReference>
<dbReference type="FunFam" id="1.20.1070.10:FF:000100">
    <property type="entry name" value="alpha-2B adrenergic receptor"/>
    <property type="match status" value="1"/>
</dbReference>
<dbReference type="Gene3D" id="1.20.1070.10">
    <property type="entry name" value="Rhodopsin 7-helix transmembrane proteins"/>
    <property type="match status" value="2"/>
</dbReference>
<dbReference type="InterPro" id="IPR002233">
    <property type="entry name" value="ADR_fam"/>
</dbReference>
<dbReference type="InterPro" id="IPR000207">
    <property type="entry name" value="ADRA2B_rcpt"/>
</dbReference>
<dbReference type="InterPro" id="IPR000276">
    <property type="entry name" value="GPCR_Rhodpsn"/>
</dbReference>
<dbReference type="InterPro" id="IPR017452">
    <property type="entry name" value="GPCR_Rhodpsn_7TM"/>
</dbReference>
<dbReference type="PANTHER" id="PTHR24248">
    <property type="entry name" value="ADRENERGIC RECEPTOR-RELATED G-PROTEIN COUPLED RECEPTOR"/>
    <property type="match status" value="1"/>
</dbReference>
<dbReference type="PANTHER" id="PTHR24248:SF130">
    <property type="entry name" value="ALPHA-2B ADRENERGIC RECEPTOR"/>
    <property type="match status" value="1"/>
</dbReference>
<dbReference type="Pfam" id="PF00001">
    <property type="entry name" value="7tm_1"/>
    <property type="match status" value="1"/>
</dbReference>
<dbReference type="PRINTS" id="PR01103">
    <property type="entry name" value="ADRENERGICR"/>
</dbReference>
<dbReference type="PRINTS" id="PR00559">
    <property type="entry name" value="ADRENRGCA2BR"/>
</dbReference>
<dbReference type="PRINTS" id="PR00237">
    <property type="entry name" value="GPCRRHODOPSN"/>
</dbReference>
<dbReference type="SMART" id="SM01381">
    <property type="entry name" value="7TM_GPCR_Srsx"/>
    <property type="match status" value="1"/>
</dbReference>
<dbReference type="SUPFAM" id="SSF81321">
    <property type="entry name" value="Family A G protein-coupled receptor-like"/>
    <property type="match status" value="1"/>
</dbReference>
<dbReference type="PROSITE" id="PS00237">
    <property type="entry name" value="G_PROTEIN_RECEP_F1_1"/>
    <property type="match status" value="1"/>
</dbReference>
<dbReference type="PROSITE" id="PS50262">
    <property type="entry name" value="G_PROTEIN_RECEP_F1_2"/>
    <property type="match status" value="1"/>
</dbReference>
<proteinExistence type="evidence at protein level"/>
<comment type="function">
    <text>Alpha-2 adrenergic receptors mediate the catecholamine-induced inhibition of adenylate cyclase through the action of G proteins.</text>
</comment>
<comment type="subunit">
    <text evidence="2">Interacts with RAB26. Interacts with PPP1R9B. Interacts with GGA1, GGA2 and GGA3.</text>
</comment>
<comment type="interaction">
    <interactant intactId="EBI-21453893">
        <id>P19328</id>
    </interactant>
    <interactant intactId="EBI-447141">
        <id>Q9UJY5</id>
        <label>GGA1</label>
    </interactant>
    <organismsDiffer>true</organismsDiffer>
    <experiments>3</experiments>
</comment>
<comment type="interaction">
    <interactant intactId="EBI-21453893">
        <id>P19328</id>
    </interactant>
    <interactant intactId="EBI-447646">
        <id>Q9UJY4</id>
        <label>GGA2</label>
    </interactant>
    <organismsDiffer>true</organismsDiffer>
    <experiments>3</experiments>
</comment>
<comment type="subcellular location">
    <subcellularLocation>
        <location evidence="2">Cell membrane</location>
        <topology evidence="2">Multi-pass membrane protein</topology>
    </subcellularLocation>
    <text evidence="2">Interaction with RAB26, GGA1, GGA2 and GGA3 mediates transport from the Golgi to the cell membrane.</text>
</comment>
<comment type="similarity">
    <text evidence="4">Belongs to the G-protein coupled receptor 1 family. Adrenergic receptor subfamily. ADRA2B sub-subfamily.</text>
</comment>
<feature type="chain" id="PRO_0000069100" description="Alpha-2B adrenergic receptor">
    <location>
        <begin position="1"/>
        <end position="453"/>
    </location>
</feature>
<feature type="topological domain" description="Extracellular" evidence="1">
    <location>
        <begin position="1"/>
        <end position="17"/>
    </location>
</feature>
<feature type="transmembrane region" description="Helical; Name=1" evidence="1">
    <location>
        <begin position="18"/>
        <end position="42"/>
    </location>
</feature>
<feature type="topological domain" description="Cytoplasmic" evidence="1">
    <location>
        <begin position="43"/>
        <end position="54"/>
    </location>
</feature>
<feature type="transmembrane region" description="Helical; Name=2" evidence="1">
    <location>
        <begin position="55"/>
        <end position="80"/>
    </location>
</feature>
<feature type="topological domain" description="Extracellular" evidence="1">
    <location>
        <begin position="81"/>
        <end position="90"/>
    </location>
</feature>
<feature type="transmembrane region" description="Helical; Name=3" evidence="1">
    <location>
        <begin position="91"/>
        <end position="113"/>
    </location>
</feature>
<feature type="topological domain" description="Cytoplasmic" evidence="1">
    <location>
        <begin position="114"/>
        <end position="135"/>
    </location>
</feature>
<feature type="transmembrane region" description="Helical; Name=4" evidence="1">
    <location>
        <begin position="136"/>
        <end position="158"/>
    </location>
</feature>
<feature type="topological domain" description="Extracellular" evidence="1">
    <location>
        <begin position="159"/>
        <end position="174"/>
    </location>
</feature>
<feature type="transmembrane region" description="Helical; Name=5" evidence="1">
    <location>
        <begin position="175"/>
        <end position="198"/>
    </location>
</feature>
<feature type="topological domain" description="Cytoplasmic" evidence="1">
    <location>
        <begin position="199"/>
        <end position="375"/>
    </location>
</feature>
<feature type="transmembrane region" description="Helical; Name=6" evidence="1">
    <location>
        <begin position="376"/>
        <end position="399"/>
    </location>
</feature>
<feature type="topological domain" description="Extracellular" evidence="1">
    <location>
        <begin position="400"/>
        <end position="408"/>
    </location>
</feature>
<feature type="transmembrane region" description="Helical; Name=7" evidence="1">
    <location>
        <begin position="409"/>
        <end position="432"/>
    </location>
</feature>
<feature type="topological domain" description="Cytoplasmic" evidence="1">
    <location>
        <begin position="433"/>
        <end position="453"/>
    </location>
</feature>
<feature type="region of interest" description="Disordered" evidence="5">
    <location>
        <begin position="213"/>
        <end position="331"/>
    </location>
</feature>
<feature type="compositionally biased region" description="Polar residues" evidence="5">
    <location>
        <begin position="287"/>
        <end position="297"/>
    </location>
</feature>
<feature type="compositionally biased region" description="Acidic residues" evidence="5">
    <location>
        <begin position="300"/>
        <end position="314"/>
    </location>
</feature>
<feature type="site" description="Implicated in ligand binding" evidence="1">
    <location>
        <position position="97"/>
    </location>
</feature>
<feature type="site" description="Implicated in catechol agonist binding" evidence="1">
    <location>
        <position position="181"/>
    </location>
</feature>
<feature type="site" description="Implicated in catechol agonist binding" evidence="1">
    <location>
        <position position="185"/>
    </location>
</feature>
<feature type="lipid moiety-binding region" description="S-palmitoyl cysteine" evidence="3">
    <location>
        <position position="445"/>
    </location>
</feature>
<feature type="disulfide bond" evidence="4">
    <location>
        <begin position="90"/>
        <end position="169"/>
    </location>
</feature>
<feature type="sequence conflict" description="In Ref. 1; AAA40635." evidence="6" ref="1">
    <original>R</original>
    <variation>C</variation>
    <location>
        <position position="132"/>
    </location>
</feature>
<feature type="sequence conflict" description="In Ref. 1; AAA40635." evidence="6" ref="1">
    <original>EP</original>
    <variation>DA</variation>
    <location>
        <begin position="162"/>
        <end position="163"/>
    </location>
</feature>
<keyword id="KW-1003">Cell membrane</keyword>
<keyword id="KW-1015">Disulfide bond</keyword>
<keyword id="KW-0297">G-protein coupled receptor</keyword>
<keyword id="KW-0449">Lipoprotein</keyword>
<keyword id="KW-0472">Membrane</keyword>
<keyword id="KW-0564">Palmitate</keyword>
<keyword id="KW-0675">Receptor</keyword>
<keyword id="KW-1185">Reference proteome</keyword>
<keyword id="KW-0807">Transducer</keyword>
<keyword id="KW-0812">Transmembrane</keyword>
<keyword id="KW-1133">Transmembrane helix</keyword>
<accession>P19328</accession>
<accession>Q63021</accession>
<accession>Q925E4</accession>
<name>ADA2B_RAT</name>